<accession>Q8TW26</accession>
<name>FLUC_METKA</name>
<gene>
    <name evidence="1" type="primary">fluC</name>
    <name evidence="1" type="synonym">crcB</name>
    <name type="ordered locus">MK1211</name>
</gene>
<sequence>MVKIGARELAAVAIGGALGAVCRYLLSGLVPQVRGFPMGTVLVNVLGSFVLGFLTWSTMLGLRLSPEVRALATVGFCGGLTTLSTMAYETVELLKASPVLSILYLTANVVLGIAAVLGGMAAAHVVWSGRA</sequence>
<evidence type="ECO:0000255" key="1">
    <source>
        <dbReference type="HAMAP-Rule" id="MF_00454"/>
    </source>
</evidence>
<comment type="function">
    <text evidence="1">Fluoride-specific ion channel. Important for reducing fluoride concentration in the cell, thus reducing its toxicity.</text>
</comment>
<comment type="catalytic activity">
    <reaction evidence="1">
        <text>fluoride(in) = fluoride(out)</text>
        <dbReference type="Rhea" id="RHEA:76159"/>
        <dbReference type="ChEBI" id="CHEBI:17051"/>
    </reaction>
    <physiologicalReaction direction="left-to-right" evidence="1">
        <dbReference type="Rhea" id="RHEA:76160"/>
    </physiologicalReaction>
</comment>
<comment type="activity regulation">
    <text evidence="1">Na(+) is not transported, but it plays an essential structural role and its presence is essential for fluoride channel function.</text>
</comment>
<comment type="subcellular location">
    <subcellularLocation>
        <location evidence="1">Cell membrane</location>
        <topology evidence="1">Multi-pass membrane protein</topology>
    </subcellularLocation>
</comment>
<comment type="similarity">
    <text evidence="1">Belongs to the fluoride channel Fluc/FEX (TC 1.A.43) family.</text>
</comment>
<organism>
    <name type="scientific">Methanopyrus kandleri (strain AV19 / DSM 6324 / JCM 9639 / NBRC 100938)</name>
    <dbReference type="NCBI Taxonomy" id="190192"/>
    <lineage>
        <taxon>Archaea</taxon>
        <taxon>Methanobacteriati</taxon>
        <taxon>Methanobacteriota</taxon>
        <taxon>Methanomada group</taxon>
        <taxon>Methanopyri</taxon>
        <taxon>Methanopyrales</taxon>
        <taxon>Methanopyraceae</taxon>
        <taxon>Methanopyrus</taxon>
    </lineage>
</organism>
<protein>
    <recommendedName>
        <fullName evidence="1">Fluoride-specific ion channel FluC</fullName>
    </recommendedName>
</protein>
<proteinExistence type="inferred from homology"/>
<dbReference type="EMBL" id="AE009439">
    <property type="protein sequence ID" value="AAM02424.1"/>
    <property type="molecule type" value="Genomic_DNA"/>
</dbReference>
<dbReference type="RefSeq" id="WP_011019579.1">
    <property type="nucleotide sequence ID" value="NC_003551.1"/>
</dbReference>
<dbReference type="SMR" id="Q8TW26"/>
<dbReference type="FunCoup" id="Q8TW26">
    <property type="interactions" value="2"/>
</dbReference>
<dbReference type="STRING" id="190192.MK1211"/>
<dbReference type="PaxDb" id="190192-MK1211"/>
<dbReference type="EnsemblBacteria" id="AAM02424">
    <property type="protein sequence ID" value="AAM02424"/>
    <property type="gene ID" value="MK1211"/>
</dbReference>
<dbReference type="GeneID" id="1477806"/>
<dbReference type="KEGG" id="mka:MK1211"/>
<dbReference type="PATRIC" id="fig|190192.8.peg.1313"/>
<dbReference type="HOGENOM" id="CLU_114342_3_2_2"/>
<dbReference type="InParanoid" id="Q8TW26"/>
<dbReference type="Proteomes" id="UP000001826">
    <property type="component" value="Chromosome"/>
</dbReference>
<dbReference type="GO" id="GO:0005886">
    <property type="term" value="C:plasma membrane"/>
    <property type="evidence" value="ECO:0007669"/>
    <property type="project" value="UniProtKB-SubCell"/>
</dbReference>
<dbReference type="GO" id="GO:0062054">
    <property type="term" value="F:fluoride channel activity"/>
    <property type="evidence" value="ECO:0007669"/>
    <property type="project" value="UniProtKB-UniRule"/>
</dbReference>
<dbReference type="GO" id="GO:0046872">
    <property type="term" value="F:metal ion binding"/>
    <property type="evidence" value="ECO:0007669"/>
    <property type="project" value="UniProtKB-KW"/>
</dbReference>
<dbReference type="GO" id="GO:0140114">
    <property type="term" value="P:cellular detoxification of fluoride"/>
    <property type="evidence" value="ECO:0007669"/>
    <property type="project" value="UniProtKB-UniRule"/>
</dbReference>
<dbReference type="HAMAP" id="MF_00454">
    <property type="entry name" value="FluC"/>
    <property type="match status" value="1"/>
</dbReference>
<dbReference type="InterPro" id="IPR003691">
    <property type="entry name" value="FluC"/>
</dbReference>
<dbReference type="NCBIfam" id="TIGR00494">
    <property type="entry name" value="crcB"/>
    <property type="match status" value="1"/>
</dbReference>
<dbReference type="PANTHER" id="PTHR28259">
    <property type="entry name" value="FLUORIDE EXPORT PROTEIN 1-RELATED"/>
    <property type="match status" value="1"/>
</dbReference>
<dbReference type="PANTHER" id="PTHR28259:SF1">
    <property type="entry name" value="FLUORIDE EXPORT PROTEIN 1-RELATED"/>
    <property type="match status" value="1"/>
</dbReference>
<dbReference type="Pfam" id="PF02537">
    <property type="entry name" value="CRCB"/>
    <property type="match status" value="1"/>
</dbReference>
<reference key="1">
    <citation type="journal article" date="2002" name="Proc. Natl. Acad. Sci. U.S.A.">
        <title>The complete genome of hyperthermophile Methanopyrus kandleri AV19 and monophyly of archaeal methanogens.</title>
        <authorList>
            <person name="Slesarev A.I."/>
            <person name="Mezhevaya K.V."/>
            <person name="Makarova K.S."/>
            <person name="Polushin N.N."/>
            <person name="Shcherbinina O.V."/>
            <person name="Shakhova V.V."/>
            <person name="Belova G.I."/>
            <person name="Aravind L."/>
            <person name="Natale D.A."/>
            <person name="Rogozin I.B."/>
            <person name="Tatusov R.L."/>
            <person name="Wolf Y.I."/>
            <person name="Stetter K.O."/>
            <person name="Malykh A.G."/>
            <person name="Koonin E.V."/>
            <person name="Kozyavkin S.A."/>
        </authorList>
    </citation>
    <scope>NUCLEOTIDE SEQUENCE [LARGE SCALE GENOMIC DNA]</scope>
    <source>
        <strain>AV19 / DSM 6324 / JCM 9639 / NBRC 100938</strain>
    </source>
</reference>
<keyword id="KW-1003">Cell membrane</keyword>
<keyword id="KW-0407">Ion channel</keyword>
<keyword id="KW-0406">Ion transport</keyword>
<keyword id="KW-0472">Membrane</keyword>
<keyword id="KW-0479">Metal-binding</keyword>
<keyword id="KW-1185">Reference proteome</keyword>
<keyword id="KW-0915">Sodium</keyword>
<keyword id="KW-0812">Transmembrane</keyword>
<keyword id="KW-1133">Transmembrane helix</keyword>
<keyword id="KW-0813">Transport</keyword>
<feature type="chain" id="PRO_0000110229" description="Fluoride-specific ion channel FluC">
    <location>
        <begin position="1"/>
        <end position="131"/>
    </location>
</feature>
<feature type="transmembrane region" description="Helical" evidence="1">
    <location>
        <begin position="10"/>
        <end position="30"/>
    </location>
</feature>
<feature type="transmembrane region" description="Helical" evidence="1">
    <location>
        <begin position="36"/>
        <end position="56"/>
    </location>
</feature>
<feature type="transmembrane region" description="Helical" evidence="1">
    <location>
        <begin position="71"/>
        <end position="91"/>
    </location>
</feature>
<feature type="transmembrane region" description="Helical" evidence="1">
    <location>
        <begin position="99"/>
        <end position="119"/>
    </location>
</feature>
<feature type="binding site" evidence="1">
    <location>
        <position position="78"/>
    </location>
    <ligand>
        <name>Na(+)</name>
        <dbReference type="ChEBI" id="CHEBI:29101"/>
        <note>structural</note>
    </ligand>
</feature>
<feature type="binding site" evidence="1">
    <location>
        <position position="81"/>
    </location>
    <ligand>
        <name>Na(+)</name>
        <dbReference type="ChEBI" id="CHEBI:29101"/>
        <note>structural</note>
    </ligand>
</feature>